<dbReference type="EC" id="2.7.7.87" evidence="1"/>
<dbReference type="EMBL" id="AP008232">
    <property type="protein sequence ID" value="BAE75518.1"/>
    <property type="molecule type" value="Genomic_DNA"/>
</dbReference>
<dbReference type="RefSeq" id="WP_011412054.1">
    <property type="nucleotide sequence ID" value="NC_007712.1"/>
</dbReference>
<dbReference type="SMR" id="Q2NQQ7"/>
<dbReference type="STRING" id="343509.SG2243"/>
<dbReference type="KEGG" id="sgl:SG2243"/>
<dbReference type="eggNOG" id="COG0009">
    <property type="taxonomic scope" value="Bacteria"/>
</dbReference>
<dbReference type="HOGENOM" id="CLU_031397_6_0_6"/>
<dbReference type="OrthoDB" id="9814580at2"/>
<dbReference type="Proteomes" id="UP000001932">
    <property type="component" value="Chromosome"/>
</dbReference>
<dbReference type="GO" id="GO:0005737">
    <property type="term" value="C:cytoplasm"/>
    <property type="evidence" value="ECO:0007669"/>
    <property type="project" value="UniProtKB-SubCell"/>
</dbReference>
<dbReference type="GO" id="GO:0005524">
    <property type="term" value="F:ATP binding"/>
    <property type="evidence" value="ECO:0007669"/>
    <property type="project" value="UniProtKB-UniRule"/>
</dbReference>
<dbReference type="GO" id="GO:0003725">
    <property type="term" value="F:double-stranded RNA binding"/>
    <property type="evidence" value="ECO:0007669"/>
    <property type="project" value="InterPro"/>
</dbReference>
<dbReference type="GO" id="GO:0061710">
    <property type="term" value="F:L-threonylcarbamoyladenylate synthase"/>
    <property type="evidence" value="ECO:0007669"/>
    <property type="project" value="UniProtKB-EC"/>
</dbReference>
<dbReference type="GO" id="GO:0000049">
    <property type="term" value="F:tRNA binding"/>
    <property type="evidence" value="ECO:0007669"/>
    <property type="project" value="TreeGrafter"/>
</dbReference>
<dbReference type="GO" id="GO:0006450">
    <property type="term" value="P:regulation of translational fidelity"/>
    <property type="evidence" value="ECO:0007669"/>
    <property type="project" value="TreeGrafter"/>
</dbReference>
<dbReference type="GO" id="GO:0002949">
    <property type="term" value="P:tRNA threonylcarbamoyladenosine modification"/>
    <property type="evidence" value="ECO:0007669"/>
    <property type="project" value="UniProtKB-UniRule"/>
</dbReference>
<dbReference type="FunFam" id="3.90.870.10:FF:000004">
    <property type="entry name" value="Threonylcarbamoyl-AMP synthase"/>
    <property type="match status" value="1"/>
</dbReference>
<dbReference type="Gene3D" id="3.90.870.10">
    <property type="entry name" value="DHBP synthase"/>
    <property type="match status" value="1"/>
</dbReference>
<dbReference type="HAMAP" id="MF_01852">
    <property type="entry name" value="TsaC"/>
    <property type="match status" value="1"/>
</dbReference>
<dbReference type="InterPro" id="IPR017945">
    <property type="entry name" value="DHBP_synth_RibB-like_a/b_dom"/>
</dbReference>
<dbReference type="InterPro" id="IPR006070">
    <property type="entry name" value="Sua5-like_dom"/>
</dbReference>
<dbReference type="InterPro" id="IPR023535">
    <property type="entry name" value="TC-AMP_synthase"/>
</dbReference>
<dbReference type="InterPro" id="IPR050156">
    <property type="entry name" value="TC-AMP_synthase_SUA5"/>
</dbReference>
<dbReference type="PANTHER" id="PTHR17490">
    <property type="entry name" value="SUA5"/>
    <property type="match status" value="1"/>
</dbReference>
<dbReference type="PANTHER" id="PTHR17490:SF18">
    <property type="entry name" value="THREONYLCARBAMOYL-AMP SYNTHASE"/>
    <property type="match status" value="1"/>
</dbReference>
<dbReference type="Pfam" id="PF01300">
    <property type="entry name" value="Sua5_yciO_yrdC"/>
    <property type="match status" value="1"/>
</dbReference>
<dbReference type="SUPFAM" id="SSF55821">
    <property type="entry name" value="YrdC/RibB"/>
    <property type="match status" value="1"/>
</dbReference>
<dbReference type="PROSITE" id="PS51163">
    <property type="entry name" value="YRDC"/>
    <property type="match status" value="1"/>
</dbReference>
<evidence type="ECO:0000255" key="1">
    <source>
        <dbReference type="HAMAP-Rule" id="MF_01852"/>
    </source>
</evidence>
<feature type="chain" id="PRO_0000352997" description="Threonylcarbamoyl-AMP synthase">
    <location>
        <begin position="1"/>
        <end position="190"/>
    </location>
</feature>
<feature type="domain" description="YrdC-like" evidence="1">
    <location>
        <begin position="7"/>
        <end position="190"/>
    </location>
</feature>
<gene>
    <name evidence="1" type="primary">tsaC</name>
    <name type="synonym">rimN</name>
    <name type="ordered locus">SG2243</name>
</gene>
<protein>
    <recommendedName>
        <fullName evidence="1">Threonylcarbamoyl-AMP synthase</fullName>
        <shortName evidence="1">TC-AMP synthase</shortName>
        <ecNumber evidence="1">2.7.7.87</ecNumber>
    </recommendedName>
    <alternativeName>
        <fullName evidence="1">L-threonylcarbamoyladenylate synthase</fullName>
    </alternativeName>
    <alternativeName>
        <fullName evidence="1">t(6)A37 threonylcarbamoyladenosine biosynthesis protein TsaC</fullName>
    </alternativeName>
    <alternativeName>
        <fullName evidence="1">tRNA threonylcarbamoyladenosine biosynthesis protein TsaC</fullName>
    </alternativeName>
</protein>
<organism>
    <name type="scientific">Sodalis glossinidius (strain morsitans)</name>
    <dbReference type="NCBI Taxonomy" id="343509"/>
    <lineage>
        <taxon>Bacteria</taxon>
        <taxon>Pseudomonadati</taxon>
        <taxon>Pseudomonadota</taxon>
        <taxon>Gammaproteobacteria</taxon>
        <taxon>Enterobacterales</taxon>
        <taxon>Bruguierivoracaceae</taxon>
        <taxon>Sodalis</taxon>
    </lineage>
</organism>
<reference key="1">
    <citation type="journal article" date="2006" name="Genome Res.">
        <title>Massive genome erosion and functional adaptations provide insights into the symbiotic lifestyle of Sodalis glossinidius in the tsetse host.</title>
        <authorList>
            <person name="Toh H."/>
            <person name="Weiss B.L."/>
            <person name="Perkin S.A.H."/>
            <person name="Yamashita A."/>
            <person name="Oshima K."/>
            <person name="Hattori M."/>
            <person name="Aksoy S."/>
        </authorList>
    </citation>
    <scope>NUCLEOTIDE SEQUENCE [LARGE SCALE GENOMIC DNA]</scope>
    <source>
        <strain>morsitans</strain>
    </source>
</reference>
<sequence length="190" mass="20476">MMIESSSQDVASLVIALRQQQVIAYPTEAVFGLGCNPDSESAVQALLALKQRPWQKGLILVAAHYAQLKEYIDDDALDDAARSRIFASWPGPVTWVIPVCPTTPSWLTGQHASLAVRVSAFEPVRRLCLAFGKPLVSTSANLTGQPPARSADEVRGQLGAAFLVLDEAVEGRLNPTEIRDALSGELIRQG</sequence>
<accession>Q2NQQ7</accession>
<comment type="function">
    <text evidence="1">Required for the formation of a threonylcarbamoyl group on adenosine at position 37 (t(6)A37) in tRNAs that read codons beginning with adenine. Catalyzes the conversion of L-threonine, HCO(3)(-)/CO(2) and ATP to give threonylcarbamoyl-AMP (TC-AMP) as the acyladenylate intermediate, with the release of diphosphate.</text>
</comment>
<comment type="catalytic activity">
    <reaction evidence="1">
        <text>L-threonine + hydrogencarbonate + ATP = L-threonylcarbamoyladenylate + diphosphate + H2O</text>
        <dbReference type="Rhea" id="RHEA:36407"/>
        <dbReference type="ChEBI" id="CHEBI:15377"/>
        <dbReference type="ChEBI" id="CHEBI:17544"/>
        <dbReference type="ChEBI" id="CHEBI:30616"/>
        <dbReference type="ChEBI" id="CHEBI:33019"/>
        <dbReference type="ChEBI" id="CHEBI:57926"/>
        <dbReference type="ChEBI" id="CHEBI:73682"/>
        <dbReference type="EC" id="2.7.7.87"/>
    </reaction>
</comment>
<comment type="subcellular location">
    <subcellularLocation>
        <location evidence="1">Cytoplasm</location>
    </subcellularLocation>
</comment>
<comment type="similarity">
    <text evidence="1">Belongs to the SUA5 family. TsaC subfamily.</text>
</comment>
<proteinExistence type="inferred from homology"/>
<name>TSAC_SODGM</name>
<keyword id="KW-0067">ATP-binding</keyword>
<keyword id="KW-0963">Cytoplasm</keyword>
<keyword id="KW-0547">Nucleotide-binding</keyword>
<keyword id="KW-0548">Nucleotidyltransferase</keyword>
<keyword id="KW-0808">Transferase</keyword>
<keyword id="KW-0819">tRNA processing</keyword>